<dbReference type="EMBL" id="AB033080">
    <property type="protein sequence ID" value="BAA86568.2"/>
    <property type="status" value="ALT_INIT"/>
    <property type="molecule type" value="mRNA"/>
</dbReference>
<dbReference type="EMBL" id="AF212228">
    <property type="protein sequence ID" value="AAK14914.1"/>
    <property type="status" value="ALT_FRAME"/>
    <property type="molecule type" value="mRNA"/>
</dbReference>
<dbReference type="EMBL" id="AK022459">
    <property type="protein sequence ID" value="BAB14042.1"/>
    <property type="molecule type" value="mRNA"/>
</dbReference>
<dbReference type="EMBL" id="AK292795">
    <property type="protein sequence ID" value="BAF85484.1"/>
    <property type="molecule type" value="mRNA"/>
</dbReference>
<dbReference type="EMBL" id="AC013355">
    <property type="status" value="NOT_ANNOTATED_CDS"/>
    <property type="molecule type" value="Genomic_DNA"/>
</dbReference>
<dbReference type="EMBL" id="AC018926">
    <property type="status" value="NOT_ANNOTATED_CDS"/>
    <property type="molecule type" value="Genomic_DNA"/>
</dbReference>
<dbReference type="EMBL" id="CH471082">
    <property type="protein sequence ID" value="EAW77481.1"/>
    <property type="molecule type" value="Genomic_DNA"/>
</dbReference>
<dbReference type="EMBL" id="BC015203">
    <property type="protein sequence ID" value="AAH15203.1"/>
    <property type="status" value="ALT_SEQ"/>
    <property type="molecule type" value="mRNA"/>
</dbReference>
<dbReference type="EMBL" id="BC029398">
    <property type="protein sequence ID" value="AAH29398.1"/>
    <property type="status" value="ALT_SEQ"/>
    <property type="molecule type" value="mRNA"/>
</dbReference>
<dbReference type="EMBL" id="BC034914">
    <property type="protein sequence ID" value="AAH34914.1"/>
    <property type="molecule type" value="mRNA"/>
</dbReference>
<dbReference type="EMBL" id="BC039871">
    <property type="protein sequence ID" value="AAH39871.1"/>
    <property type="molecule type" value="mRNA"/>
</dbReference>
<dbReference type="EMBL" id="AF011794">
    <property type="protein sequence ID" value="AAB69314.1"/>
    <property type="status" value="ALT_SEQ"/>
    <property type="molecule type" value="mRNA"/>
</dbReference>
<dbReference type="CCDS" id="CCDS42039.1">
    <molecule id="Q9ULG6-1"/>
</dbReference>
<dbReference type="CCDS" id="CCDS55966.1">
    <molecule id="Q9ULG6-5"/>
</dbReference>
<dbReference type="CCDS" id="CCDS55967.1">
    <molecule id="Q9ULG6-3"/>
</dbReference>
<dbReference type="RefSeq" id="NP_001191379.1">
    <molecule id="Q9ULG6-5"/>
    <property type="nucleotide sequence ID" value="NM_001204450.2"/>
</dbReference>
<dbReference type="RefSeq" id="NP_001191380.1">
    <molecule id="Q9ULG6-3"/>
    <property type="nucleotide sequence ID" value="NM_001204451.2"/>
</dbReference>
<dbReference type="RefSeq" id="NP_004739.3">
    <molecule id="Q9ULG6-1"/>
    <property type="nucleotide sequence ID" value="NM_004748.4"/>
</dbReference>
<dbReference type="RefSeq" id="NP_065790.2">
    <molecule id="Q9ULG6-1"/>
    <property type="nucleotide sequence ID" value="NM_020739.5"/>
</dbReference>
<dbReference type="PDB" id="7D0E">
    <property type="method" value="X-ray"/>
    <property type="resolution" value="1.40 A"/>
    <property type="chains" value="B=101-113"/>
</dbReference>
<dbReference type="PDBsum" id="7D0E"/>
<dbReference type="SMR" id="Q9ULG6"/>
<dbReference type="BioGRID" id="114665">
    <property type="interactions" value="93"/>
</dbReference>
<dbReference type="FunCoup" id="Q9ULG6">
    <property type="interactions" value="841"/>
</dbReference>
<dbReference type="IntAct" id="Q9ULG6">
    <property type="interactions" value="57"/>
</dbReference>
<dbReference type="MINT" id="Q9ULG6"/>
<dbReference type="STRING" id="9606.ENSP00000403400"/>
<dbReference type="GlyGen" id="Q9ULG6">
    <property type="glycosylation" value="2 sites, 1 N-linked glycan (1 site)"/>
</dbReference>
<dbReference type="iPTMnet" id="Q9ULG6"/>
<dbReference type="PhosphoSitePlus" id="Q9ULG6"/>
<dbReference type="BioMuta" id="CCPG1"/>
<dbReference type="DMDM" id="160380597"/>
<dbReference type="jPOST" id="Q9ULG6"/>
<dbReference type="MassIVE" id="Q9ULG6"/>
<dbReference type="PaxDb" id="9606-ENSP00000403400"/>
<dbReference type="PeptideAtlas" id="Q9ULG6"/>
<dbReference type="ProteomicsDB" id="1897"/>
<dbReference type="ProteomicsDB" id="85016">
    <molecule id="Q9ULG6-1"/>
</dbReference>
<dbReference type="ProteomicsDB" id="85017">
    <molecule id="Q9ULG6-2"/>
</dbReference>
<dbReference type="ProteomicsDB" id="85018">
    <molecule id="Q9ULG6-3"/>
</dbReference>
<dbReference type="ProteomicsDB" id="85019">
    <molecule id="Q9ULG6-4"/>
</dbReference>
<dbReference type="Pumba" id="Q9ULG6"/>
<dbReference type="Antibodypedia" id="57643">
    <property type="antibodies" value="66 antibodies from 18 providers"/>
</dbReference>
<dbReference type="DNASU" id="9236"/>
<dbReference type="Ensembl" id="ENST00000310958.10">
    <molecule id="Q9ULG6-1"/>
    <property type="protein sequence ID" value="ENSP00000311656.6"/>
    <property type="gene ID" value="ENSG00000260916.8"/>
</dbReference>
<dbReference type="Ensembl" id="ENST00000425574.7">
    <molecule id="Q9ULG6-3"/>
    <property type="protein sequence ID" value="ENSP00000415128.3"/>
    <property type="gene ID" value="ENSG00000260916.8"/>
</dbReference>
<dbReference type="Ensembl" id="ENST00000442196.8">
    <molecule id="Q9ULG6-5"/>
    <property type="protein sequence ID" value="ENSP00000403400.3"/>
    <property type="gene ID" value="ENSG00000260916.8"/>
</dbReference>
<dbReference type="Ensembl" id="ENST00000569205.5">
    <molecule id="Q9ULG6-1"/>
    <property type="protein sequence ID" value="ENSP00000454456.1"/>
    <property type="gene ID" value="ENSG00000260916.8"/>
</dbReference>
<dbReference type="GeneID" id="9236"/>
<dbReference type="KEGG" id="hsa:9236"/>
<dbReference type="MANE-Select" id="ENST00000442196.8">
    <molecule id="Q9ULG6-5"/>
    <property type="protein sequence ID" value="ENSP00000403400.3"/>
    <property type="RefSeq nucleotide sequence ID" value="NM_001204450.2"/>
    <property type="RefSeq protein sequence ID" value="NP_001191379.1"/>
</dbReference>
<dbReference type="UCSC" id="uc002acv.3">
    <molecule id="Q9ULG6-1"/>
    <property type="organism name" value="human"/>
</dbReference>
<dbReference type="AGR" id="HGNC:24227"/>
<dbReference type="CTD" id="9236"/>
<dbReference type="DisGeNET" id="9236"/>
<dbReference type="GeneCards" id="CCPG1"/>
<dbReference type="HGNC" id="HGNC:24227">
    <property type="gene designation" value="CCPG1"/>
</dbReference>
<dbReference type="HPA" id="ENSG00000260916">
    <property type="expression patterns" value="Low tissue specificity"/>
</dbReference>
<dbReference type="MalaCards" id="CCPG1"/>
<dbReference type="MIM" id="611326">
    <property type="type" value="gene"/>
</dbReference>
<dbReference type="neXtProt" id="NX_Q9ULG6"/>
<dbReference type="OpenTargets" id="ENSG00000260916"/>
<dbReference type="PharmGKB" id="PA134967250"/>
<dbReference type="VEuPathDB" id="HostDB:ENSG00000260916"/>
<dbReference type="eggNOG" id="ENOG502QWDZ">
    <property type="taxonomic scope" value="Eukaryota"/>
</dbReference>
<dbReference type="GeneTree" id="ENSGT00940000160497"/>
<dbReference type="HOGENOM" id="CLU_018722_0_0_1"/>
<dbReference type="InParanoid" id="Q9ULG6"/>
<dbReference type="OMA" id="LDAFHHW"/>
<dbReference type="OrthoDB" id="9935772at2759"/>
<dbReference type="PAN-GO" id="Q9ULG6">
    <property type="GO annotations" value="2 GO annotations based on evolutionary models"/>
</dbReference>
<dbReference type="PhylomeDB" id="Q9ULG6"/>
<dbReference type="TreeFam" id="TF333202"/>
<dbReference type="PathwayCommons" id="Q9ULG6"/>
<dbReference type="SignaLink" id="Q9ULG6"/>
<dbReference type="BioGRID-ORCS" id="9236">
    <property type="hits" value="12 hits in 1162 CRISPR screens"/>
</dbReference>
<dbReference type="GenomeRNAi" id="9236"/>
<dbReference type="Pharos" id="Q9ULG6">
    <property type="development level" value="Tbio"/>
</dbReference>
<dbReference type="PRO" id="PR:Q9ULG6"/>
<dbReference type="Proteomes" id="UP000005640">
    <property type="component" value="Chromosome 15"/>
</dbReference>
<dbReference type="RNAct" id="Q9ULG6">
    <property type="molecule type" value="protein"/>
</dbReference>
<dbReference type="Bgee" id="ENSG00000260916">
    <property type="expression patterns" value="Expressed in calcaneal tendon and 145 other cell types or tissues"/>
</dbReference>
<dbReference type="ExpressionAtlas" id="Q9ULG6">
    <property type="expression patterns" value="baseline and differential"/>
</dbReference>
<dbReference type="GO" id="GO:0016020">
    <property type="term" value="C:membrane"/>
    <property type="evidence" value="ECO:0000318"/>
    <property type="project" value="GO_Central"/>
</dbReference>
<dbReference type="GO" id="GO:0045787">
    <property type="term" value="P:positive regulation of cell cycle"/>
    <property type="evidence" value="ECO:0000315"/>
    <property type="project" value="UniProtKB"/>
</dbReference>
<dbReference type="GO" id="GO:0008284">
    <property type="term" value="P:positive regulation of cell population proliferation"/>
    <property type="evidence" value="ECO:0000315"/>
    <property type="project" value="UniProtKB"/>
</dbReference>
<dbReference type="GO" id="GO:0045944">
    <property type="term" value="P:positive regulation of transcription by RNA polymerase II"/>
    <property type="evidence" value="ECO:0007669"/>
    <property type="project" value="Ensembl"/>
</dbReference>
<dbReference type="Gene3D" id="1.20.120.20">
    <property type="entry name" value="Apolipoprotein"/>
    <property type="match status" value="1"/>
</dbReference>
<dbReference type="InterPro" id="IPR051990">
    <property type="entry name" value="CCPG1/PBIP1"/>
</dbReference>
<dbReference type="PANTHER" id="PTHR28638">
    <property type="entry name" value="CELL CYCLE PROGRESSION PROTEIN 1"/>
    <property type="match status" value="1"/>
</dbReference>
<dbReference type="PANTHER" id="PTHR28638:SF2">
    <property type="entry name" value="CELL CYCLE PROGRESSION PROTEIN 1"/>
    <property type="match status" value="1"/>
</dbReference>
<reference key="1">
    <citation type="journal article" date="1999" name="DNA Res.">
        <title>Prediction of the coding sequences of unidentified human genes. XV. The complete sequences of 100 new cDNA clones from brain which code for large proteins in vitro.</title>
        <authorList>
            <person name="Nagase T."/>
            <person name="Ishikawa K."/>
            <person name="Kikuno R."/>
            <person name="Hirosawa M."/>
            <person name="Nomura N."/>
            <person name="Ohara O."/>
        </authorList>
    </citation>
    <scope>NUCLEOTIDE SEQUENCE [LARGE SCALE MRNA] (ISOFORM 1)</scope>
    <source>
        <tissue>Brain</tissue>
    </source>
</reference>
<reference key="2">
    <citation type="journal article" date="2002" name="DNA Res.">
        <title>Construction of expression-ready cDNA clones for KIAA genes: manual curation of 330 KIAA cDNA clones.</title>
        <authorList>
            <person name="Nakajima D."/>
            <person name="Okazaki N."/>
            <person name="Yamakawa H."/>
            <person name="Kikuno R."/>
            <person name="Ohara O."/>
            <person name="Nagase T."/>
        </authorList>
    </citation>
    <scope>SEQUENCE REVISION</scope>
</reference>
<reference key="3">
    <citation type="submission" date="1999-12" db="EMBL/GenBank/DDBJ databases">
        <title>A novel gene expressed in human liver non-tumor tissues.</title>
        <authorList>
            <person name="Li Y."/>
            <person name="Wu T."/>
            <person name="Xu S."/>
            <person name="Ren S."/>
            <person name="Chen Z."/>
            <person name="Han Z."/>
        </authorList>
    </citation>
    <scope>NUCLEOTIDE SEQUENCE [LARGE SCALE MRNA] (ISOFORM 4)</scope>
    <source>
        <tissue>Liver</tissue>
    </source>
</reference>
<reference key="4">
    <citation type="journal article" date="2004" name="Nat. Genet.">
        <title>Complete sequencing and characterization of 21,243 full-length human cDNAs.</title>
        <authorList>
            <person name="Ota T."/>
            <person name="Suzuki Y."/>
            <person name="Nishikawa T."/>
            <person name="Otsuki T."/>
            <person name="Sugiyama T."/>
            <person name="Irie R."/>
            <person name="Wakamatsu A."/>
            <person name="Hayashi K."/>
            <person name="Sato H."/>
            <person name="Nagai K."/>
            <person name="Kimura K."/>
            <person name="Makita H."/>
            <person name="Sekine M."/>
            <person name="Obayashi M."/>
            <person name="Nishi T."/>
            <person name="Shibahara T."/>
            <person name="Tanaka T."/>
            <person name="Ishii S."/>
            <person name="Yamamoto J."/>
            <person name="Saito K."/>
            <person name="Kawai Y."/>
            <person name="Isono Y."/>
            <person name="Nakamura Y."/>
            <person name="Nagahari K."/>
            <person name="Murakami K."/>
            <person name="Yasuda T."/>
            <person name="Iwayanagi T."/>
            <person name="Wagatsuma M."/>
            <person name="Shiratori A."/>
            <person name="Sudo H."/>
            <person name="Hosoiri T."/>
            <person name="Kaku Y."/>
            <person name="Kodaira H."/>
            <person name="Kondo H."/>
            <person name="Sugawara M."/>
            <person name="Takahashi M."/>
            <person name="Kanda K."/>
            <person name="Yokoi T."/>
            <person name="Furuya T."/>
            <person name="Kikkawa E."/>
            <person name="Omura Y."/>
            <person name="Abe K."/>
            <person name="Kamihara K."/>
            <person name="Katsuta N."/>
            <person name="Sato K."/>
            <person name="Tanikawa M."/>
            <person name="Yamazaki M."/>
            <person name="Ninomiya K."/>
            <person name="Ishibashi T."/>
            <person name="Yamashita H."/>
            <person name="Murakawa K."/>
            <person name="Fujimori K."/>
            <person name="Tanai H."/>
            <person name="Kimata M."/>
            <person name="Watanabe M."/>
            <person name="Hiraoka S."/>
            <person name="Chiba Y."/>
            <person name="Ishida S."/>
            <person name="Ono Y."/>
            <person name="Takiguchi S."/>
            <person name="Watanabe S."/>
            <person name="Yosida M."/>
            <person name="Hotuta T."/>
            <person name="Kusano J."/>
            <person name="Kanehori K."/>
            <person name="Takahashi-Fujii A."/>
            <person name="Hara H."/>
            <person name="Tanase T.-O."/>
            <person name="Nomura Y."/>
            <person name="Togiya S."/>
            <person name="Komai F."/>
            <person name="Hara R."/>
            <person name="Takeuchi K."/>
            <person name="Arita M."/>
            <person name="Imose N."/>
            <person name="Musashino K."/>
            <person name="Yuuki H."/>
            <person name="Oshima A."/>
            <person name="Sasaki N."/>
            <person name="Aotsuka S."/>
            <person name="Yoshikawa Y."/>
            <person name="Matsunawa H."/>
            <person name="Ichihara T."/>
            <person name="Shiohata N."/>
            <person name="Sano S."/>
            <person name="Moriya S."/>
            <person name="Momiyama H."/>
            <person name="Satoh N."/>
            <person name="Takami S."/>
            <person name="Terashima Y."/>
            <person name="Suzuki O."/>
            <person name="Nakagawa S."/>
            <person name="Senoh A."/>
            <person name="Mizoguchi H."/>
            <person name="Goto Y."/>
            <person name="Shimizu F."/>
            <person name="Wakebe H."/>
            <person name="Hishigaki H."/>
            <person name="Watanabe T."/>
            <person name="Sugiyama A."/>
            <person name="Takemoto M."/>
            <person name="Kawakami B."/>
            <person name="Yamazaki M."/>
            <person name="Watanabe K."/>
            <person name="Kumagai A."/>
            <person name="Itakura S."/>
            <person name="Fukuzumi Y."/>
            <person name="Fujimori Y."/>
            <person name="Komiyama M."/>
            <person name="Tashiro H."/>
            <person name="Tanigami A."/>
            <person name="Fujiwara T."/>
            <person name="Ono T."/>
            <person name="Yamada K."/>
            <person name="Fujii Y."/>
            <person name="Ozaki K."/>
            <person name="Hirao M."/>
            <person name="Ohmori Y."/>
            <person name="Kawabata A."/>
            <person name="Hikiji T."/>
            <person name="Kobatake N."/>
            <person name="Inagaki H."/>
            <person name="Ikema Y."/>
            <person name="Okamoto S."/>
            <person name="Okitani R."/>
            <person name="Kawakami T."/>
            <person name="Noguchi S."/>
            <person name="Itoh T."/>
            <person name="Shigeta K."/>
            <person name="Senba T."/>
            <person name="Matsumura K."/>
            <person name="Nakajima Y."/>
            <person name="Mizuno T."/>
            <person name="Morinaga M."/>
            <person name="Sasaki M."/>
            <person name="Togashi T."/>
            <person name="Oyama M."/>
            <person name="Hata H."/>
            <person name="Watanabe M."/>
            <person name="Komatsu T."/>
            <person name="Mizushima-Sugano J."/>
            <person name="Satoh T."/>
            <person name="Shirai Y."/>
            <person name="Takahashi Y."/>
            <person name="Nakagawa K."/>
            <person name="Okumura K."/>
            <person name="Nagase T."/>
            <person name="Nomura N."/>
            <person name="Kikuchi H."/>
            <person name="Masuho Y."/>
            <person name="Yamashita R."/>
            <person name="Nakai K."/>
            <person name="Yada T."/>
            <person name="Nakamura Y."/>
            <person name="Ohara O."/>
            <person name="Isogai T."/>
            <person name="Sugano S."/>
        </authorList>
    </citation>
    <scope>NUCLEOTIDE SEQUENCE [LARGE SCALE MRNA] (ISOFORMS 3 AND 5)</scope>
    <source>
        <tissue>Mammary gland</tissue>
        <tissue>Trachea</tissue>
    </source>
</reference>
<reference key="5">
    <citation type="journal article" date="2006" name="Nature">
        <title>Analysis of the DNA sequence and duplication history of human chromosome 15.</title>
        <authorList>
            <person name="Zody M.C."/>
            <person name="Garber M."/>
            <person name="Sharpe T."/>
            <person name="Young S.K."/>
            <person name="Rowen L."/>
            <person name="O'Neill K."/>
            <person name="Whittaker C.A."/>
            <person name="Kamal M."/>
            <person name="Chang J.L."/>
            <person name="Cuomo C.A."/>
            <person name="Dewar K."/>
            <person name="FitzGerald M.G."/>
            <person name="Kodira C.D."/>
            <person name="Madan A."/>
            <person name="Qin S."/>
            <person name="Yang X."/>
            <person name="Abbasi N."/>
            <person name="Abouelleil A."/>
            <person name="Arachchi H.M."/>
            <person name="Baradarani L."/>
            <person name="Birditt B."/>
            <person name="Bloom S."/>
            <person name="Bloom T."/>
            <person name="Borowsky M.L."/>
            <person name="Burke J."/>
            <person name="Butler J."/>
            <person name="Cook A."/>
            <person name="DeArellano K."/>
            <person name="DeCaprio D."/>
            <person name="Dorris L. III"/>
            <person name="Dors M."/>
            <person name="Eichler E.E."/>
            <person name="Engels R."/>
            <person name="Fahey J."/>
            <person name="Fleetwood P."/>
            <person name="Friedman C."/>
            <person name="Gearin G."/>
            <person name="Hall J.L."/>
            <person name="Hensley G."/>
            <person name="Johnson E."/>
            <person name="Jones C."/>
            <person name="Kamat A."/>
            <person name="Kaur A."/>
            <person name="Locke D.P."/>
            <person name="Madan A."/>
            <person name="Munson G."/>
            <person name="Jaffe D.B."/>
            <person name="Lui A."/>
            <person name="Macdonald P."/>
            <person name="Mauceli E."/>
            <person name="Naylor J.W."/>
            <person name="Nesbitt R."/>
            <person name="Nicol R."/>
            <person name="O'Leary S.B."/>
            <person name="Ratcliffe A."/>
            <person name="Rounsley S."/>
            <person name="She X."/>
            <person name="Sneddon K.M.B."/>
            <person name="Stewart S."/>
            <person name="Sougnez C."/>
            <person name="Stone S.M."/>
            <person name="Topham K."/>
            <person name="Vincent D."/>
            <person name="Wang S."/>
            <person name="Zimmer A.R."/>
            <person name="Birren B.W."/>
            <person name="Hood L."/>
            <person name="Lander E.S."/>
            <person name="Nusbaum C."/>
        </authorList>
    </citation>
    <scope>NUCLEOTIDE SEQUENCE [LARGE SCALE GENOMIC DNA]</scope>
</reference>
<reference key="6">
    <citation type="submission" date="2005-07" db="EMBL/GenBank/DDBJ databases">
        <authorList>
            <person name="Mural R.J."/>
            <person name="Istrail S."/>
            <person name="Sutton G.G."/>
            <person name="Florea L."/>
            <person name="Halpern A.L."/>
            <person name="Mobarry C.M."/>
            <person name="Lippert R."/>
            <person name="Walenz B."/>
            <person name="Shatkay H."/>
            <person name="Dew I."/>
            <person name="Miller J.R."/>
            <person name="Flanigan M.J."/>
            <person name="Edwards N.J."/>
            <person name="Bolanos R."/>
            <person name="Fasulo D."/>
            <person name="Halldorsson B.V."/>
            <person name="Hannenhalli S."/>
            <person name="Turner R."/>
            <person name="Yooseph S."/>
            <person name="Lu F."/>
            <person name="Nusskern D.R."/>
            <person name="Shue B.C."/>
            <person name="Zheng X.H."/>
            <person name="Zhong F."/>
            <person name="Delcher A.L."/>
            <person name="Huson D.H."/>
            <person name="Kravitz S.A."/>
            <person name="Mouchard L."/>
            <person name="Reinert K."/>
            <person name="Remington K.A."/>
            <person name="Clark A.G."/>
            <person name="Waterman M.S."/>
            <person name="Eichler E.E."/>
            <person name="Adams M.D."/>
            <person name="Hunkapiller M.W."/>
            <person name="Myers E.W."/>
            <person name="Venter J.C."/>
        </authorList>
    </citation>
    <scope>NUCLEOTIDE SEQUENCE [LARGE SCALE GENOMIC DNA]</scope>
</reference>
<reference key="7">
    <citation type="journal article" date="2004" name="Genome Res.">
        <title>The status, quality, and expansion of the NIH full-length cDNA project: the Mammalian Gene Collection (MGC).</title>
        <authorList>
            <consortium name="The MGC Project Team"/>
        </authorList>
    </citation>
    <scope>NUCLEOTIDE SEQUENCE [LARGE SCALE MRNA] (ISOFORMS 1 AND 2)</scope>
    <scope>VARIANTS VAL-161; LEU-436; GLU-627 AND ILE-646</scope>
    <source>
        <tissue>Brain</tissue>
        <tissue>Lymph</tissue>
        <tissue>Placenta</tissue>
        <tissue>Skin</tissue>
    </source>
</reference>
<reference key="8">
    <citation type="journal article" date="1997" name="Genetics">
        <title>Human CPR (cell cycle progression restoration) genes impart a Far-phenotype on yeast cells.</title>
        <authorList>
            <person name="Edwards M.C."/>
            <person name="Liegeois N."/>
            <person name="Horecka J."/>
            <person name="DePinho R.A."/>
            <person name="Sprague G.F. Jr."/>
            <person name="Tyers M."/>
            <person name="Elledge S.J."/>
        </authorList>
    </citation>
    <scope>NUCLEOTIDE SEQUENCE [MRNA] OF 379-757 (ISOFORM 4)</scope>
    <scope>FUNCTION</scope>
    <scope>VARIANTS VAL-477 AND ASP-517</scope>
</reference>
<reference key="9">
    <citation type="journal article" date="2013" name="J. Proteome Res.">
        <title>Toward a comprehensive characterization of a human cancer cell phosphoproteome.</title>
        <authorList>
            <person name="Zhou H."/>
            <person name="Di Palma S."/>
            <person name="Preisinger C."/>
            <person name="Peng M."/>
            <person name="Polat A.N."/>
            <person name="Heck A.J."/>
            <person name="Mohammed S."/>
        </authorList>
    </citation>
    <scope>PHOSPHORYLATION [LARGE SCALE ANALYSIS] AT SER-186</scope>
    <scope>IDENTIFICATION BY MASS SPECTROMETRY [LARGE SCALE ANALYSIS]</scope>
    <source>
        <tissue>Cervix carcinoma</tissue>
        <tissue>Erythroleukemia</tissue>
    </source>
</reference>
<reference key="10">
    <citation type="journal article" date="2014" name="J. Proteomics">
        <title>An enzyme assisted RP-RPLC approach for in-depth analysis of human liver phosphoproteome.</title>
        <authorList>
            <person name="Bian Y."/>
            <person name="Song C."/>
            <person name="Cheng K."/>
            <person name="Dong M."/>
            <person name="Wang F."/>
            <person name="Huang J."/>
            <person name="Sun D."/>
            <person name="Wang L."/>
            <person name="Ye M."/>
            <person name="Zou H."/>
        </authorList>
    </citation>
    <scope>PHOSPHORYLATION [LARGE SCALE ANALYSIS] AT SER-186</scope>
    <scope>IDENTIFICATION BY MASS SPECTROMETRY [LARGE SCALE ANALYSIS]</scope>
    <source>
        <tissue>Liver</tissue>
    </source>
</reference>
<reference key="11">
    <citation type="journal article" date="2015" name="Proteomics">
        <title>N-terminome analysis of the human mitochondrial proteome.</title>
        <authorList>
            <person name="Vaca Jacome A.S."/>
            <person name="Rabilloud T."/>
            <person name="Schaeffer-Reiss C."/>
            <person name="Rompais M."/>
            <person name="Ayoub D."/>
            <person name="Lane L."/>
            <person name="Bairoch A."/>
            <person name="Van Dorsselaer A."/>
            <person name="Carapito C."/>
        </authorList>
    </citation>
    <scope>IDENTIFICATION BY MASS SPECTROMETRY [LARGE SCALE ANALYSIS]</scope>
</reference>
<comment type="function">
    <text evidence="1 5">Acts as an assembly platform for Rho protein signaling complexes. Limits guanine nucleotide exchange activity of MCF2L toward RHOA, which results in an inhibition of both its transcriptional activation ability and its transforming activity. Does not inhibit activity of MCF2L toward CDC42, or activity of MCF2 toward either RHOA or CDC42 (By similarity). May be involved in cell cycle regulation.</text>
</comment>
<comment type="subunit">
    <text evidence="1">Interacts with MCF2L. May interact with MCF2, ARHGEF1, BCR, VAV1 and FGD1, but not with TIAM1. Interacts with GTP-bound CDC42 and SRC (By similarity).</text>
</comment>
<comment type="subcellular location">
    <subcellularLocation>
        <location evidence="1">Cytoplasmic granule membrane</location>
        <topology evidence="1">Single-pass type II membrane protein</topology>
    </subcellularLocation>
</comment>
<comment type="alternative products">
    <event type="alternative splicing"/>
    <isoform>
        <id>Q9ULG6-1</id>
        <name>1</name>
        <sequence type="displayed"/>
    </isoform>
    <isoform>
        <id>Q9ULG6-2</id>
        <name>2</name>
        <sequence type="described" ref="VSP_029311 VSP_029312"/>
    </isoform>
    <isoform>
        <id>Q9ULG6-3</id>
        <name>3</name>
        <sequence type="described" ref="VSP_029313 VSP_029316"/>
    </isoform>
    <isoform>
        <id>Q9ULG6-4</id>
        <name>4</name>
        <sequence type="described" ref="VSP_029314 VSP_029315"/>
    </isoform>
    <isoform>
        <id>Q9ULG6-5</id>
        <name>5</name>
        <sequence type="described" ref="VSP_029316"/>
    </isoform>
</comment>
<comment type="similarity">
    <text evidence="10">Belongs to the CCPG1 family.</text>
</comment>
<comment type="sequence caution" evidence="10">
    <conflict type="erroneous initiation">
        <sequence resource="EMBL-CDS" id="AAB69314"/>
    </conflict>
    <text>Truncated N-terminus.</text>
</comment>
<comment type="sequence caution" evidence="10">
    <conflict type="miscellaneous discrepancy">
        <sequence resource="EMBL-CDS" id="AAH15203"/>
    </conflict>
    <text>Contaminating sequence. Potential poly-A sequence.</text>
</comment>
<comment type="sequence caution" evidence="10">
    <conflict type="miscellaneous discrepancy">
        <sequence resource="EMBL-CDS" id="AAH29398"/>
    </conflict>
    <text>Contaminating sequence. Potential poly-A sequence.</text>
</comment>
<comment type="sequence caution" evidence="10">
    <conflict type="erroneous initiation">
        <sequence resource="EMBL-CDS" id="BAA86568"/>
    </conflict>
</comment>
<comment type="sequence caution" evidence="10">
    <molecule>Isoform 4</molecule>
    <conflict type="frameshift">
        <sequence resource="EMBL-CDS" id="AAB69314"/>
    </conflict>
</comment>
<comment type="sequence caution" evidence="10">
    <molecule>Isoform 4</molecule>
    <conflict type="frameshift">
        <sequence resource="EMBL-CDS" id="AAK14914"/>
    </conflict>
</comment>
<accession>Q9ULG6</accession>
<accession>A0PJH3</accession>
<accession>A8K9T0</accession>
<accession>O14712</accession>
<accession>Q05DG4</accession>
<accession>Q5U5S7</accession>
<accession>Q8IYV8</accession>
<accession>Q9BY53</accession>
<accession>Q9HA17</accession>
<gene>
    <name type="primary">CCPG1</name>
    <name type="synonym">CCP8</name>
    <name type="synonym">CPR8</name>
    <name type="synonym">KIAA1254</name>
</gene>
<keyword id="KW-0002">3D-structure</keyword>
<keyword id="KW-0025">Alternative splicing</keyword>
<keyword id="KW-0131">Cell cycle</keyword>
<keyword id="KW-0175">Coiled coil</keyword>
<keyword id="KW-0472">Membrane</keyword>
<keyword id="KW-0597">Phosphoprotein</keyword>
<keyword id="KW-1267">Proteomics identification</keyword>
<keyword id="KW-1185">Reference proteome</keyword>
<keyword id="KW-0735">Signal-anchor</keyword>
<keyword id="KW-0812">Transmembrane</keyword>
<keyword id="KW-1133">Transmembrane helix</keyword>
<protein>
    <recommendedName>
        <fullName>Cell cycle progression protein 1</fullName>
    </recommendedName>
    <alternativeName>
        <fullName>Cell cycle progression restoration protein 8</fullName>
    </alternativeName>
</protein>
<evidence type="ECO:0000250" key="1"/>
<evidence type="ECO:0000255" key="2"/>
<evidence type="ECO:0000256" key="3">
    <source>
        <dbReference type="SAM" id="MobiDB-lite"/>
    </source>
</evidence>
<evidence type="ECO:0000269" key="4">
    <source>
    </source>
</evidence>
<evidence type="ECO:0000269" key="5">
    <source>
    </source>
</evidence>
<evidence type="ECO:0000303" key="6">
    <source>
    </source>
</evidence>
<evidence type="ECO:0000303" key="7">
    <source>
    </source>
</evidence>
<evidence type="ECO:0000303" key="8">
    <source>
    </source>
</evidence>
<evidence type="ECO:0000303" key="9">
    <source ref="3"/>
</evidence>
<evidence type="ECO:0000305" key="10"/>
<evidence type="ECO:0007744" key="11">
    <source>
    </source>
</evidence>
<evidence type="ECO:0007744" key="12">
    <source>
    </source>
</evidence>
<evidence type="ECO:0007829" key="13">
    <source>
        <dbReference type="PDB" id="7D0E"/>
    </source>
</evidence>
<sequence length="757" mass="87340">MSENSSDSDSSCGWTVISHEGSDIEMLNSVTPTDSCEPAPECSSLEQEELQALQIEQGESSQNGTVLMEETAYPALEETSSTIEAEEQKIPEDSIYIGTASDDSDIVTLEPPKLEEIGNQEVVIVEEAQSSEDFNMGSSSSSQYTFCQPETVFSSQPSDDESSSDETSNQPSPAFRRRRARKKTVSASESEDRLVAEQETEPSKELSKRQFSSGLNKCVILALVIAISMGFGHFYGTIQIQKRQQLVRKIHEDELNDMKDYLSQCQQEQESFIDYKSLKENLARCWTLTEAEKMSFETQKTNLATENQYLRVSLEKEEKALSSLQEELNKLREQIRILEDKGTSTELVKENQKLKQHLEEEKQKKHSFLSQRETLLTEAKMLKRELERERLVTTALRGELQQLSGSQLHGKSDSPNVYTEKKEIAILRERLTELERKLTFEQQRSDLWERLYVEAKDQNGKQGTDGKKKGGRGSHRAKNKSKETFLGSVKETFDAMKNSTKEFVRHHKEKIKQAKEAVKENLKKFSDSVKSTFRHFKDTTKNIFDEKGNKRFGATKEAAEKPRTVFSDYLHPQYKAPTENHHNRGPTMQNDGRKEKPVHFKEFRKNTNSKKCSPGHDCRENSHSFRKACSGVFDCAQQESMSLFNTVVNPIRMDEFRQIIQRYMLKELDTFCHWNELDQFINKFFLNGVFIHDQKLFTDFVNDVKDYLRNMKEYEVDNDGVFEKLDEYIYRHFFGHTFSPPYGPRSVYIKPCHYSSL</sequence>
<organism>
    <name type="scientific">Homo sapiens</name>
    <name type="common">Human</name>
    <dbReference type="NCBI Taxonomy" id="9606"/>
    <lineage>
        <taxon>Eukaryota</taxon>
        <taxon>Metazoa</taxon>
        <taxon>Chordata</taxon>
        <taxon>Craniata</taxon>
        <taxon>Vertebrata</taxon>
        <taxon>Euteleostomi</taxon>
        <taxon>Mammalia</taxon>
        <taxon>Eutheria</taxon>
        <taxon>Euarchontoglires</taxon>
        <taxon>Primates</taxon>
        <taxon>Haplorrhini</taxon>
        <taxon>Catarrhini</taxon>
        <taxon>Hominidae</taxon>
        <taxon>Homo</taxon>
    </lineage>
</organism>
<proteinExistence type="evidence at protein level"/>
<name>CCPG1_HUMAN</name>
<feature type="chain" id="PRO_0000310538" description="Cell cycle progression protein 1">
    <location>
        <begin position="1"/>
        <end position="757"/>
    </location>
</feature>
<feature type="topological domain" description="Cytoplasmic" evidence="2">
    <location>
        <begin position="1"/>
        <end position="217"/>
    </location>
</feature>
<feature type="transmembrane region" description="Helical; Signal-anchor for type II membrane protein" evidence="2">
    <location>
        <begin position="218"/>
        <end position="238"/>
    </location>
</feature>
<feature type="topological domain" description="Lumenal" evidence="2">
    <location>
        <begin position="239"/>
        <end position="757"/>
    </location>
</feature>
<feature type="region of interest" description="Interaction with MCF2L and SRC" evidence="1">
    <location>
        <begin position="1"/>
        <end position="308"/>
    </location>
</feature>
<feature type="region of interest" description="Disordered" evidence="3">
    <location>
        <begin position="152"/>
        <end position="207"/>
    </location>
</feature>
<feature type="region of interest" description="Disordered" evidence="3">
    <location>
        <begin position="458"/>
        <end position="483"/>
    </location>
</feature>
<feature type="coiled-coil region" evidence="2">
    <location>
        <begin position="248"/>
        <end position="272"/>
    </location>
</feature>
<feature type="coiled-coil region" evidence="2">
    <location>
        <begin position="306"/>
        <end position="450"/>
    </location>
</feature>
<feature type="coiled-coil region" evidence="2">
    <location>
        <begin position="504"/>
        <end position="530"/>
    </location>
</feature>
<feature type="compositionally biased region" description="Basic residues" evidence="3">
    <location>
        <begin position="175"/>
        <end position="184"/>
    </location>
</feature>
<feature type="compositionally biased region" description="Basic and acidic residues" evidence="3">
    <location>
        <begin position="190"/>
        <end position="207"/>
    </location>
</feature>
<feature type="compositionally biased region" description="Basic and acidic residues" evidence="3">
    <location>
        <begin position="458"/>
        <end position="468"/>
    </location>
</feature>
<feature type="compositionally biased region" description="Basic residues" evidence="3">
    <location>
        <begin position="469"/>
        <end position="479"/>
    </location>
</feature>
<feature type="modified residue" description="Phosphoserine" evidence="11 12">
    <location>
        <position position="186"/>
    </location>
</feature>
<feature type="splice variant" id="VSP_029311" description="In isoform 2." evidence="7">
    <location>
        <begin position="1"/>
        <end position="144"/>
    </location>
</feature>
<feature type="splice variant" id="VSP_029312" description="In isoform 2." evidence="7">
    <original>TFCQPET</original>
    <variation>MSTFFLI</variation>
    <location>
        <begin position="145"/>
        <end position="151"/>
    </location>
</feature>
<feature type="splice variant" id="VSP_029313" description="In isoform 3." evidence="6">
    <location>
        <begin position="312"/>
        <end position="694"/>
    </location>
</feature>
<feature type="splice variant" id="VSP_029314" description="In isoform 4." evidence="8 9">
    <original>HNRGPTMQNDGRKEKPV</original>
    <variation>SRPYYAKRWKERKASSL</variation>
    <location>
        <begin position="582"/>
        <end position="598"/>
    </location>
</feature>
<feature type="splice variant" id="VSP_029315" description="In isoform 4." evidence="8 9">
    <location>
        <begin position="599"/>
        <end position="757"/>
    </location>
</feature>
<feature type="splice variant" id="VSP_029316" description="In isoform 3 and isoform 5." evidence="6">
    <original>RSVYIKPCHYSSL</original>
    <variation>SRPDKKQRMVNIENSRHRKQEQKHLQPQPYKREGKWHKYGRTNGRQMANLEIELGQLPFDPQY</variation>
    <location>
        <begin position="745"/>
        <end position="757"/>
    </location>
</feature>
<feature type="sequence variant" id="VAR_037063" description="In dbSNP:rs11555304.">
    <original>S</original>
    <variation>P</variation>
    <location>
        <position position="44"/>
    </location>
</feature>
<feature type="sequence variant" id="VAR_037064" description="In dbSNP:rs17853336." evidence="4">
    <original>E</original>
    <variation>V</variation>
    <location>
        <position position="161"/>
    </location>
</feature>
<feature type="sequence variant" id="VAR_037065" description="In dbSNP:rs34958422.">
    <original>Y</original>
    <variation>H</variation>
    <location>
        <position position="418"/>
    </location>
</feature>
<feature type="sequence variant" id="VAR_037066" description="In dbSNP:rs17857026." evidence="4">
    <original>R</original>
    <variation>L</variation>
    <location>
        <position position="436"/>
    </location>
</feature>
<feature type="sequence variant" id="VAR_037067" description="In dbSNP:rs1063562." evidence="5">
    <original>A</original>
    <variation>V</variation>
    <location>
        <position position="477"/>
    </location>
</feature>
<feature type="sequence variant" id="VAR_037068" description="In dbSNP:rs1063563." evidence="5">
    <original>A</original>
    <variation>D</variation>
    <location>
        <position position="517"/>
    </location>
</feature>
<feature type="sequence variant" id="VAR_037069" description="In dbSNP:rs1063565.">
    <original>G</original>
    <variation>D</variation>
    <location>
        <position position="553"/>
    </location>
</feature>
<feature type="sequence variant" id="VAR_037070" description="In dbSNP:rs1063564.">
    <original>G</original>
    <variation>S</variation>
    <location>
        <position position="553"/>
    </location>
</feature>
<feature type="sequence variant" id="VAR_037071" description="In dbSNP:rs1063566.">
    <original>N</original>
    <variation>K</variation>
    <location>
        <position position="590"/>
    </location>
</feature>
<feature type="sequence variant" id="VAR_037072" description="In dbSNP:rs17853335." evidence="4">
    <original>K</original>
    <variation>E</variation>
    <location>
        <position position="627"/>
    </location>
</feature>
<feature type="sequence variant" id="VAR_037073" description="In dbSNP:rs17857027." evidence="4">
    <original>T</original>
    <variation>I</variation>
    <location>
        <position position="646"/>
    </location>
</feature>
<feature type="sequence variant" id="VAR_037074" description="In dbSNP:rs1063567.">
    <original>H</original>
    <variation>R</variation>
    <location>
        <position position="673"/>
    </location>
</feature>
<feature type="sequence conflict" description="In Ref. 1; BAA86568." evidence="10" ref="1">
    <original>A</original>
    <variation>G</variation>
    <location>
        <position position="196"/>
    </location>
</feature>
<feature type="sequence conflict" description="In Ref. 4; BAB14042." evidence="10" ref="4">
    <original>E</original>
    <variation>G</variation>
    <location>
        <position position="270"/>
    </location>
</feature>
<feature type="sequence conflict" description="In Ref. 7; AAH29398 and 8; AAB69314." evidence="10" ref="7 8">
    <original>E</original>
    <variation>G</variation>
    <location>
        <position position="483"/>
    </location>
</feature>
<feature type="sequence conflict" description="In Ref. 8; AAB69314." evidence="10" ref="8">
    <original>G</original>
    <variation>N</variation>
    <location>
        <position position="553"/>
    </location>
</feature>
<feature type="strand" evidence="13">
    <location>
        <begin position="106"/>
        <end position="110"/>
    </location>
</feature>